<organism>
    <name type="scientific">Conus betulinus</name>
    <name type="common">Beech cone</name>
    <dbReference type="NCBI Taxonomy" id="89764"/>
    <lineage>
        <taxon>Eukaryota</taxon>
        <taxon>Metazoa</taxon>
        <taxon>Spiralia</taxon>
        <taxon>Lophotrochozoa</taxon>
        <taxon>Mollusca</taxon>
        <taxon>Gastropoda</taxon>
        <taxon>Caenogastropoda</taxon>
        <taxon>Neogastropoda</taxon>
        <taxon>Conoidea</taxon>
        <taxon>Conidae</taxon>
        <taxon>Conus</taxon>
        <taxon>Dendroconus</taxon>
    </lineage>
</organism>
<evidence type="ECO:0000250" key="1"/>
<evidence type="ECO:0000255" key="2"/>
<evidence type="ECO:0000303" key="3">
    <source>
    </source>
</evidence>
<evidence type="ECO:0000305" key="4"/>
<feature type="signal peptide" evidence="2">
    <location>
        <begin position="1"/>
        <end position="19"/>
    </location>
</feature>
<feature type="propeptide" id="PRO_0000315480" evidence="4">
    <location>
        <begin position="20"/>
        <end position="38"/>
    </location>
</feature>
<feature type="peptide" id="PRO_0000315481" description="Conotoxin Bt6.6">
    <location>
        <begin position="41"/>
        <end position="77"/>
    </location>
</feature>
<feature type="disulfide bond" evidence="1">
    <location>
        <begin position="51"/>
        <end position="65"/>
    </location>
</feature>
<feature type="disulfide bond" evidence="1">
    <location>
        <begin position="58"/>
        <end position="69"/>
    </location>
</feature>
<feature type="disulfide bond" evidence="1">
    <location>
        <begin position="64"/>
        <end position="74"/>
    </location>
</feature>
<name>O264_CONBE</name>
<dbReference type="EMBL" id="DQ141154">
    <property type="protein sequence ID" value="AAZ83755.1"/>
    <property type="molecule type" value="mRNA"/>
</dbReference>
<dbReference type="ConoServer" id="1115">
    <property type="toxin name" value="BeB54 precursor"/>
</dbReference>
<dbReference type="GO" id="GO:0005576">
    <property type="term" value="C:extracellular region"/>
    <property type="evidence" value="ECO:0007669"/>
    <property type="project" value="UniProtKB-SubCell"/>
</dbReference>
<dbReference type="GO" id="GO:0008200">
    <property type="term" value="F:ion channel inhibitor activity"/>
    <property type="evidence" value="ECO:0007669"/>
    <property type="project" value="InterPro"/>
</dbReference>
<dbReference type="GO" id="GO:0090729">
    <property type="term" value="F:toxin activity"/>
    <property type="evidence" value="ECO:0007669"/>
    <property type="project" value="UniProtKB-KW"/>
</dbReference>
<dbReference type="InterPro" id="IPR004214">
    <property type="entry name" value="Conotoxin"/>
</dbReference>
<dbReference type="Pfam" id="PF02950">
    <property type="entry name" value="Conotoxin"/>
    <property type="match status" value="1"/>
</dbReference>
<proteinExistence type="evidence at transcript level"/>
<keyword id="KW-0165">Cleavage on pair of basic residues</keyword>
<keyword id="KW-1015">Disulfide bond</keyword>
<keyword id="KW-0960">Knottin</keyword>
<keyword id="KW-0528">Neurotoxin</keyword>
<keyword id="KW-0964">Secreted</keyword>
<keyword id="KW-0732">Signal</keyword>
<keyword id="KW-0800">Toxin</keyword>
<sequence>MEKLTILLLVAAVLMSTQALIQSDGEKRQQAKINFLSXRKSTAESWWEGECKGWSVYCSWDWECCSGECTRYYCELW</sequence>
<comment type="subcellular location">
    <subcellularLocation>
        <location evidence="1">Secreted</location>
    </subcellularLocation>
</comment>
<comment type="tissue specificity">
    <text>Expressed by the venom duct.</text>
</comment>
<comment type="domain">
    <text evidence="1">The presence of a 'disulfide through disulfide knot' structurally defines this protein as a knottin.</text>
</comment>
<comment type="domain">
    <text>The cysteine framework is VI/VII (C-C-CC-C-C).</text>
</comment>
<comment type="similarity">
    <text evidence="4">Belongs to the conotoxin O2 superfamily.</text>
</comment>
<protein>
    <recommendedName>
        <fullName evidence="4">Conotoxin Bt6.6</fullName>
    </recommendedName>
    <alternativeName>
        <fullName evidence="3">Conotoxin BeB54</fullName>
    </alternativeName>
</protein>
<accession>Q3YEF9</accession>
<reference key="1">
    <citation type="journal article" date="2006" name="Chem. Biol. Drug Des.">
        <title>Novel O-superfamily conotoxins identified by cDNA cloning from three vermivorous Conus species.</title>
        <authorList>
            <person name="Zhangsun D."/>
            <person name="Luo S."/>
            <person name="Wu Y."/>
            <person name="Zhu X."/>
            <person name="Hu Y."/>
            <person name="Xie L."/>
        </authorList>
    </citation>
    <scope>NUCLEOTIDE SEQUENCE [MRNA]</scope>
    <source>
        <tissue>Venom duct</tissue>
    </source>
</reference>